<keyword id="KW-1064">Adaptive immunity</keyword>
<keyword id="KW-0963">Cytoplasm</keyword>
<keyword id="KW-0391">Immunity</keyword>
<keyword id="KW-0399">Innate immunity</keyword>
<keyword id="KW-1185">Reference proteome</keyword>
<keyword id="KW-0727">SH2 domain</keyword>
<comment type="function">
    <text evidence="2 4">Cytoplasmic adapter regulating receptors of the signaling lymphocytic activation molecule (SLAM) family. In SLAM signaling may cooperate with Sh2d1a/SAP. Plays a role in regulation of effector functions of natural killer (NK) cells by controlling signal transduction through Cd244/2b4. However, conflicting results are reported which may reflect the use of different strain backgrounds. Proposed to act as an inhibitor of Cd244-mediated NK cell function including cytotoxicity and IFN-gamma production, the latter found also by triggering Klra4 and Klrk1 next to Cd244 (PubMed:16127454). Seems to positively regulate Cd244- and Cd84-dependent NK cell functions implicating Cd244-mediated phosphorylation of Vav1 (PubMed:20962259).</text>
</comment>
<comment type="subunit">
    <text evidence="2 3">Interacts with SLAMF1 (phosphorylated). Interacts with CD244. Interacts with Src kinases HCK, LYN, FYN, FGR and LCK (via kinase domains).</text>
</comment>
<comment type="subcellular location">
    <subcellularLocation>
        <location evidence="7">Cytoplasm</location>
    </subcellularLocation>
</comment>
<comment type="tissue specificity">
    <text evidence="2 3">Expressed in spleen. Expressed in macrophages, CD8(+) T-Cells and NK cells (PubMed:16425036). Conflictingly found only in NK cells (PubMed:16127454).</text>
</comment>
<feature type="chain" id="PRO_0000435288" description="SH2 domain-containing protein 1B2">
    <location>
        <begin position="1"/>
        <end position="132"/>
    </location>
</feature>
<feature type="domain" description="SH2" evidence="1">
    <location>
        <begin position="5"/>
        <end position="101"/>
    </location>
</feature>
<feature type="sequence variant" description="In strain: 129Sv." evidence="7">
    <original>G</original>
    <variation>S</variation>
    <location>
        <position position="23"/>
    </location>
</feature>
<evidence type="ECO:0000255" key="1">
    <source>
        <dbReference type="PROSITE-ProRule" id="PRU00191"/>
    </source>
</evidence>
<evidence type="ECO:0000269" key="2">
    <source>
    </source>
</evidence>
<evidence type="ECO:0000269" key="3">
    <source>
    </source>
</evidence>
<evidence type="ECO:0000269" key="4">
    <source>
    </source>
</evidence>
<evidence type="ECO:0000303" key="5">
    <source>
    </source>
</evidence>
<evidence type="ECO:0000303" key="6">
    <source>
    </source>
</evidence>
<evidence type="ECO:0000305" key="7"/>
<organism>
    <name type="scientific">Mus musculus</name>
    <name type="common">Mouse</name>
    <dbReference type="NCBI Taxonomy" id="10090"/>
    <lineage>
        <taxon>Eukaryota</taxon>
        <taxon>Metazoa</taxon>
        <taxon>Chordata</taxon>
        <taxon>Craniata</taxon>
        <taxon>Vertebrata</taxon>
        <taxon>Euteleostomi</taxon>
        <taxon>Mammalia</taxon>
        <taxon>Eutheria</taxon>
        <taxon>Euarchontoglires</taxon>
        <taxon>Glires</taxon>
        <taxon>Rodentia</taxon>
        <taxon>Myomorpha</taxon>
        <taxon>Muroidea</taxon>
        <taxon>Muridae</taxon>
        <taxon>Murinae</taxon>
        <taxon>Mus</taxon>
        <taxon>Mus</taxon>
    </lineage>
</organism>
<reference key="1">
    <citation type="journal article" date="2005" name="Nat. Immunol.">
        <title>Negative regulation of natural killer cell function by EAT-2, a SAP-related adaptor.</title>
        <authorList>
            <person name="Roncagalli R."/>
            <person name="Taylor J.E."/>
            <person name="Zhang S."/>
            <person name="Shi X."/>
            <person name="Chen R."/>
            <person name="Cruz-Munoz M.E."/>
            <person name="Yin L."/>
            <person name="Latour S."/>
            <person name="Veillette A."/>
        </authorList>
    </citation>
    <scope>NUCLEOTIDE SEQUENCE [MRNA]</scope>
    <scope>FUNCTION</scope>
    <scope>TISSUE SPECIFICITY</scope>
    <scope>INTERACTION WITH CD244</scope>
    <source>
        <strain>129/Sv</strain>
    </source>
</reference>
<reference key="2">
    <citation type="journal article" date="2006" name="Immunogenetics">
        <title>Identification and characterization of two related murine genes, Eat2a and Eat2b, encoding single SH2-domain adapters.</title>
        <authorList>
            <person name="Calpe S."/>
            <person name="Erdos E."/>
            <person name="Liao G."/>
            <person name="Wang N."/>
            <person name="Rietdijk S."/>
            <person name="Simarro M."/>
            <person name="Scholtz B."/>
            <person name="Mooney J."/>
            <person name="Lee C.H."/>
            <person name="Shin M.S."/>
            <person name="Rajnavoelgyi E."/>
            <person name="Schatzle J."/>
            <person name="Morse H.C. III"/>
            <person name="Terhorst C."/>
            <person name="Lanyi A."/>
        </authorList>
    </citation>
    <scope>NUCLEOTIDE SEQUENCE [GENOMIC DNA / MRNA]</scope>
    <scope>TISSUE SPECIFICITY</scope>
    <scope>INTERACTION WITH SLAMF1; HCK; LYN; FYN; FGR AND LCK</scope>
    <source>
        <strain>129/Sv</strain>
        <strain>C57BL/6J</strain>
    </source>
</reference>
<reference key="3">
    <citation type="journal article" date="2009" name="PLoS Biol.">
        <title>Lineage-specific biology revealed by a finished genome assembly of the mouse.</title>
        <authorList>
            <person name="Church D.M."/>
            <person name="Goodstadt L."/>
            <person name="Hillier L.W."/>
            <person name="Zody M.C."/>
            <person name="Goldstein S."/>
            <person name="She X."/>
            <person name="Bult C.J."/>
            <person name="Agarwala R."/>
            <person name="Cherry J.L."/>
            <person name="DiCuccio M."/>
            <person name="Hlavina W."/>
            <person name="Kapustin Y."/>
            <person name="Meric P."/>
            <person name="Maglott D."/>
            <person name="Birtle Z."/>
            <person name="Marques A.C."/>
            <person name="Graves T."/>
            <person name="Zhou S."/>
            <person name="Teague B."/>
            <person name="Potamousis K."/>
            <person name="Churas C."/>
            <person name="Place M."/>
            <person name="Herschleb J."/>
            <person name="Runnheim R."/>
            <person name="Forrest D."/>
            <person name="Amos-Landgraf J."/>
            <person name="Schwartz D.C."/>
            <person name="Cheng Z."/>
            <person name="Lindblad-Toh K."/>
            <person name="Eichler E.E."/>
            <person name="Ponting C.P."/>
        </authorList>
    </citation>
    <scope>NUCLEOTIDE SEQUENCE [LARGE SCALE GENOMIC DNA]</scope>
    <source>
        <strain>C57BL/6J</strain>
    </source>
</reference>
<reference key="4">
    <citation type="journal article" date="2010" name="J. Immunol.">
        <title>The adapters EAT-2A and -2B are positive regulators of CD244- and CD84-dependent NK cell functions in the C57BL/6 mouse.</title>
        <authorList>
            <person name="Wang N."/>
            <person name="Calpe S."/>
            <person name="Westcott J."/>
            <person name="Castro W."/>
            <person name="Ma C."/>
            <person name="Engel P."/>
            <person name="Schatzle J.D."/>
            <person name="Terhorst C."/>
        </authorList>
    </citation>
    <scope>FUNCTION</scope>
</reference>
<gene>
    <name type="primary">Sh2d1b2</name>
    <name type="synonym">Eat2b</name>
    <name type="synonym">Sh2d1c</name>
</gene>
<protein>
    <recommendedName>
        <fullName>SH2 domain-containing protein 1B2</fullName>
    </recommendedName>
    <alternativeName>
        <fullName evidence="5">EAT-2-related transducer</fullName>
        <shortName evidence="5">ERT</shortName>
    </alternativeName>
    <alternativeName>
        <fullName evidence="6">EAT-2B</fullName>
    </alternativeName>
</protein>
<proteinExistence type="evidence at protein level"/>
<dbReference type="EMBL" id="DQ140178">
    <property type="protein sequence ID" value="AAZ94715.1"/>
    <property type="molecule type" value="mRNA"/>
</dbReference>
<dbReference type="EMBL" id="DQ131181">
    <property type="protein sequence ID" value="AAZ66860.1"/>
    <property type="molecule type" value="mRNA"/>
</dbReference>
<dbReference type="EMBL" id="AC123650">
    <property type="status" value="NOT_ANNOTATED_CDS"/>
    <property type="molecule type" value="Genomic_DNA"/>
</dbReference>
<dbReference type="EMBL" id="DQ132512">
    <property type="protein sequence ID" value="AAZ66330.1"/>
    <property type="molecule type" value="Genomic_DNA"/>
</dbReference>
<dbReference type="EMBL" id="DQ132511">
    <property type="protein sequence ID" value="AAZ66330.1"/>
    <property type="status" value="JOINED"/>
    <property type="molecule type" value="Genomic_DNA"/>
</dbReference>
<dbReference type="CCDS" id="CCDS15469.1"/>
<dbReference type="RefSeq" id="NP_001028671.1">
    <property type="nucleotide sequence ID" value="NM_001033499.1"/>
</dbReference>
<dbReference type="SMR" id="Q45HK4"/>
<dbReference type="FunCoup" id="Q45HK4">
    <property type="interactions" value="178"/>
</dbReference>
<dbReference type="STRING" id="10090.ENSMUSP00000125121"/>
<dbReference type="PhosphoSitePlus" id="Q45HK4"/>
<dbReference type="PaxDb" id="10090-ENSMUSP00000125121"/>
<dbReference type="ProteomicsDB" id="261019"/>
<dbReference type="DNASU" id="545378"/>
<dbReference type="Ensembl" id="ENSMUST00000162752.2">
    <property type="protein sequence ID" value="ENSMUSP00000125121.2"/>
    <property type="gene ID" value="ENSMUSG00000073494.6"/>
</dbReference>
<dbReference type="GeneID" id="545378"/>
<dbReference type="KEGG" id="mmu:545378"/>
<dbReference type="UCSC" id="uc007dmb.1">
    <property type="organism name" value="mouse"/>
</dbReference>
<dbReference type="AGR" id="MGI:3622649"/>
<dbReference type="CTD" id="545378"/>
<dbReference type="MGI" id="MGI:3622649">
    <property type="gene designation" value="Sh2d1b2"/>
</dbReference>
<dbReference type="VEuPathDB" id="HostDB:ENSMUSG00000073494"/>
<dbReference type="eggNOG" id="KOG0565">
    <property type="taxonomic scope" value="Eukaryota"/>
</dbReference>
<dbReference type="GeneTree" id="ENSGT00940000163577"/>
<dbReference type="HOGENOM" id="CLU_125532_0_0_1"/>
<dbReference type="InParanoid" id="Q45HK4"/>
<dbReference type="OMA" id="PRWRRSQ"/>
<dbReference type="OrthoDB" id="10053436at2759"/>
<dbReference type="PhylomeDB" id="Q45HK4"/>
<dbReference type="TreeFam" id="TF343096"/>
<dbReference type="BioGRID-ORCS" id="545378">
    <property type="hits" value="2 hits in 76 CRISPR screens"/>
</dbReference>
<dbReference type="PRO" id="PR:Q45HK4"/>
<dbReference type="Proteomes" id="UP000000589">
    <property type="component" value="Chromosome 1"/>
</dbReference>
<dbReference type="RNAct" id="Q45HK4">
    <property type="molecule type" value="protein"/>
</dbReference>
<dbReference type="Bgee" id="ENSMUSG00000073494">
    <property type="expression patterns" value="Expressed in mesodermal cell in embryo and 11 other cell types or tissues"/>
</dbReference>
<dbReference type="ExpressionAtlas" id="Q45HK4">
    <property type="expression patterns" value="baseline and differential"/>
</dbReference>
<dbReference type="GO" id="GO:0005737">
    <property type="term" value="C:cytoplasm"/>
    <property type="evidence" value="ECO:0007669"/>
    <property type="project" value="UniProtKB-SubCell"/>
</dbReference>
<dbReference type="GO" id="GO:0002250">
    <property type="term" value="P:adaptive immune response"/>
    <property type="evidence" value="ECO:0007669"/>
    <property type="project" value="UniProtKB-KW"/>
</dbReference>
<dbReference type="GO" id="GO:0042267">
    <property type="term" value="P:natural killer cell mediated cytotoxicity"/>
    <property type="evidence" value="ECO:0000315"/>
    <property type="project" value="MGI"/>
</dbReference>
<dbReference type="GO" id="GO:0045953">
    <property type="term" value="P:negative regulation of natural killer cell mediated cytotoxicity"/>
    <property type="evidence" value="ECO:0000315"/>
    <property type="project" value="MGI"/>
</dbReference>
<dbReference type="GO" id="GO:0045954">
    <property type="term" value="P:positive regulation of natural killer cell mediated cytotoxicity"/>
    <property type="evidence" value="ECO:0000316"/>
    <property type="project" value="MGI"/>
</dbReference>
<dbReference type="GO" id="GO:0032814">
    <property type="term" value="P:regulation of natural killer cell activation"/>
    <property type="evidence" value="ECO:0000316"/>
    <property type="project" value="MGI"/>
</dbReference>
<dbReference type="CDD" id="cd10342">
    <property type="entry name" value="SH2_SAP1"/>
    <property type="match status" value="1"/>
</dbReference>
<dbReference type="FunFam" id="3.30.505.10:FF:000092">
    <property type="entry name" value="SH2 domain containing 1B"/>
    <property type="match status" value="1"/>
</dbReference>
<dbReference type="Gene3D" id="3.30.505.10">
    <property type="entry name" value="SH2 domain"/>
    <property type="match status" value="1"/>
</dbReference>
<dbReference type="InterPro" id="IPR035049">
    <property type="entry name" value="EAT2_SH2"/>
</dbReference>
<dbReference type="InterPro" id="IPR000980">
    <property type="entry name" value="SH2"/>
</dbReference>
<dbReference type="InterPro" id="IPR036860">
    <property type="entry name" value="SH2_dom_sf"/>
</dbReference>
<dbReference type="PANTHER" id="PTHR46051:SF3">
    <property type="entry name" value="PHOSPHATIDYLINOSITOL 3,4,5-TRISPHOSPHATE 5-PHOSPHATASE 1"/>
    <property type="match status" value="1"/>
</dbReference>
<dbReference type="PANTHER" id="PTHR46051">
    <property type="entry name" value="SH2 DOMAIN-CONTAINING PROTEIN"/>
    <property type="match status" value="1"/>
</dbReference>
<dbReference type="Pfam" id="PF00017">
    <property type="entry name" value="SH2"/>
    <property type="match status" value="1"/>
</dbReference>
<dbReference type="PRINTS" id="PR00401">
    <property type="entry name" value="SH2DOMAIN"/>
</dbReference>
<dbReference type="SMART" id="SM00252">
    <property type="entry name" value="SH2"/>
    <property type="match status" value="1"/>
</dbReference>
<dbReference type="SUPFAM" id="SSF55550">
    <property type="entry name" value="SH2 domain"/>
    <property type="match status" value="1"/>
</dbReference>
<dbReference type="PROSITE" id="PS50001">
    <property type="entry name" value="SH2"/>
    <property type="match status" value="1"/>
</dbReference>
<accession>Q45HK4</accession>
<accession>Q45GR3</accession>
<sequence>MDLPYYHGCLTKRECEALLLKGGVDGNFLIRDSESVPGALCLCVSFKKLVYNYRIFREKNGYYRIETEPSTPKTIFPNLEELISKFKTPGQGMVVHLSNPIMRSGFCPGARRLNLEANVYENTDEEYVDVLP</sequence>
<name>SH21C_MOUSE</name>